<reference key="1">
    <citation type="journal article" date="2004" name="Proc. Natl. Acad. Sci. U.S.A.">
        <title>Genome sequence of the enterobacterial phytopathogen Erwinia carotovora subsp. atroseptica and characterization of virulence factors.</title>
        <authorList>
            <person name="Bell K.S."/>
            <person name="Sebaihia M."/>
            <person name="Pritchard L."/>
            <person name="Holden M.T.G."/>
            <person name="Hyman L.J."/>
            <person name="Holeva M.C."/>
            <person name="Thomson N.R."/>
            <person name="Bentley S.D."/>
            <person name="Churcher L.J.C."/>
            <person name="Mungall K."/>
            <person name="Atkin R."/>
            <person name="Bason N."/>
            <person name="Brooks K."/>
            <person name="Chillingworth T."/>
            <person name="Clark K."/>
            <person name="Doggett J."/>
            <person name="Fraser A."/>
            <person name="Hance Z."/>
            <person name="Hauser H."/>
            <person name="Jagels K."/>
            <person name="Moule S."/>
            <person name="Norbertczak H."/>
            <person name="Ormond D."/>
            <person name="Price C."/>
            <person name="Quail M.A."/>
            <person name="Sanders M."/>
            <person name="Walker D."/>
            <person name="Whitehead S."/>
            <person name="Salmond G.P.C."/>
            <person name="Birch P.R.J."/>
            <person name="Parkhill J."/>
            <person name="Toth I.K."/>
        </authorList>
    </citation>
    <scope>NUCLEOTIDE SEQUENCE [LARGE SCALE GENOMIC DNA]</scope>
    <source>
        <strain>SCRI 1043 / ATCC BAA-672</strain>
    </source>
</reference>
<dbReference type="EMBL" id="BX950851">
    <property type="protein sequence ID" value="CAG74250.1"/>
    <property type="molecule type" value="Genomic_DNA"/>
</dbReference>
<dbReference type="RefSeq" id="WP_011092925.1">
    <property type="nucleotide sequence ID" value="NC_004547.2"/>
</dbReference>
<dbReference type="SMR" id="Q6D7I5"/>
<dbReference type="STRING" id="218491.ECA1340"/>
<dbReference type="KEGG" id="eca:ECA1340"/>
<dbReference type="PATRIC" id="fig|218491.5.peg.1371"/>
<dbReference type="eggNOG" id="COG2156">
    <property type="taxonomic scope" value="Bacteria"/>
</dbReference>
<dbReference type="HOGENOM" id="CLU_077094_2_0_6"/>
<dbReference type="OrthoDB" id="9788285at2"/>
<dbReference type="Proteomes" id="UP000007966">
    <property type="component" value="Chromosome"/>
</dbReference>
<dbReference type="GO" id="GO:0005886">
    <property type="term" value="C:plasma membrane"/>
    <property type="evidence" value="ECO:0007669"/>
    <property type="project" value="UniProtKB-SubCell"/>
</dbReference>
<dbReference type="GO" id="GO:0005524">
    <property type="term" value="F:ATP binding"/>
    <property type="evidence" value="ECO:0007669"/>
    <property type="project" value="UniProtKB-UniRule"/>
</dbReference>
<dbReference type="GO" id="GO:0008556">
    <property type="term" value="F:P-type potassium transmembrane transporter activity"/>
    <property type="evidence" value="ECO:0007669"/>
    <property type="project" value="InterPro"/>
</dbReference>
<dbReference type="HAMAP" id="MF_00276">
    <property type="entry name" value="KdpC"/>
    <property type="match status" value="1"/>
</dbReference>
<dbReference type="InterPro" id="IPR003820">
    <property type="entry name" value="KdpC"/>
</dbReference>
<dbReference type="NCBIfam" id="TIGR00681">
    <property type="entry name" value="kdpC"/>
    <property type="match status" value="1"/>
</dbReference>
<dbReference type="NCBIfam" id="NF001454">
    <property type="entry name" value="PRK00315.1"/>
    <property type="match status" value="1"/>
</dbReference>
<dbReference type="PANTHER" id="PTHR30042">
    <property type="entry name" value="POTASSIUM-TRANSPORTING ATPASE C CHAIN"/>
    <property type="match status" value="1"/>
</dbReference>
<dbReference type="PANTHER" id="PTHR30042:SF2">
    <property type="entry name" value="POTASSIUM-TRANSPORTING ATPASE KDPC SUBUNIT"/>
    <property type="match status" value="1"/>
</dbReference>
<dbReference type="Pfam" id="PF02669">
    <property type="entry name" value="KdpC"/>
    <property type="match status" value="1"/>
</dbReference>
<dbReference type="PIRSF" id="PIRSF001296">
    <property type="entry name" value="K_ATPase_KdpC"/>
    <property type="match status" value="1"/>
</dbReference>
<sequence>MRYLRSSLFLFLLLLLVTGLAYPLLTTVLAQWLFPTQANGSLIYRDNAVVGSSLIGQSFSRTGYFQGRPSATSDAPYNALASGGSNLAASNPALDKQIGERAAYWHQAVSNQQPIPAELLTASGSGLDPQISPEAARYQALYVAQARGMSLQQIQQLIDRFTETSKPTFIGQPTVNVLLLNLALDEEKPLP</sequence>
<name>KDPC_PECAS</name>
<feature type="chain" id="PRO_1000022284" description="Potassium-transporting ATPase KdpC subunit">
    <location>
        <begin position="1"/>
        <end position="191"/>
    </location>
</feature>
<feature type="transmembrane region" description="Helical" evidence="1">
    <location>
        <begin position="8"/>
        <end position="28"/>
    </location>
</feature>
<gene>
    <name evidence="1" type="primary">kdpC</name>
    <name type="ordered locus">ECA1340</name>
</gene>
<proteinExistence type="inferred from homology"/>
<evidence type="ECO:0000255" key="1">
    <source>
        <dbReference type="HAMAP-Rule" id="MF_00276"/>
    </source>
</evidence>
<keyword id="KW-0067">ATP-binding</keyword>
<keyword id="KW-0997">Cell inner membrane</keyword>
<keyword id="KW-1003">Cell membrane</keyword>
<keyword id="KW-0406">Ion transport</keyword>
<keyword id="KW-0472">Membrane</keyword>
<keyword id="KW-0547">Nucleotide-binding</keyword>
<keyword id="KW-0630">Potassium</keyword>
<keyword id="KW-0633">Potassium transport</keyword>
<keyword id="KW-1185">Reference proteome</keyword>
<keyword id="KW-0812">Transmembrane</keyword>
<keyword id="KW-1133">Transmembrane helix</keyword>
<keyword id="KW-0813">Transport</keyword>
<accession>Q6D7I5</accession>
<protein>
    <recommendedName>
        <fullName evidence="1">Potassium-transporting ATPase KdpC subunit</fullName>
    </recommendedName>
    <alternativeName>
        <fullName evidence="1">ATP phosphohydrolase [potassium-transporting] C chain</fullName>
    </alternativeName>
    <alternativeName>
        <fullName evidence="1">Potassium-binding and translocating subunit C</fullName>
    </alternativeName>
    <alternativeName>
        <fullName evidence="1">Potassium-translocating ATPase C chain</fullName>
    </alternativeName>
</protein>
<comment type="function">
    <text evidence="1">Part of the high-affinity ATP-driven potassium transport (or Kdp) system, which catalyzes the hydrolysis of ATP coupled with the electrogenic transport of potassium into the cytoplasm. This subunit acts as a catalytic chaperone that increases the ATP-binding affinity of the ATP-hydrolyzing subunit KdpB by the formation of a transient KdpB/KdpC/ATP ternary complex.</text>
</comment>
<comment type="subunit">
    <text evidence="1">The system is composed of three essential subunits: KdpA, KdpB and KdpC.</text>
</comment>
<comment type="subcellular location">
    <subcellularLocation>
        <location evidence="1">Cell inner membrane</location>
        <topology evidence="1">Single-pass membrane protein</topology>
    </subcellularLocation>
</comment>
<comment type="similarity">
    <text evidence="1">Belongs to the KdpC family.</text>
</comment>
<organism>
    <name type="scientific">Pectobacterium atrosepticum (strain SCRI 1043 / ATCC BAA-672)</name>
    <name type="common">Erwinia carotovora subsp. atroseptica</name>
    <dbReference type="NCBI Taxonomy" id="218491"/>
    <lineage>
        <taxon>Bacteria</taxon>
        <taxon>Pseudomonadati</taxon>
        <taxon>Pseudomonadota</taxon>
        <taxon>Gammaproteobacteria</taxon>
        <taxon>Enterobacterales</taxon>
        <taxon>Pectobacteriaceae</taxon>
        <taxon>Pectobacterium</taxon>
    </lineage>
</organism>